<feature type="signal peptide" evidence="1">
    <location>
        <begin position="1"/>
        <end position="21"/>
    </location>
</feature>
<feature type="propeptide" id="PRO_0000011220">
    <location>
        <begin position="22"/>
        <end position="42"/>
    </location>
</feature>
<feature type="peptide" id="PRO_0000011221" description="Gastric inhibitory polypeptide">
    <location>
        <begin position="44"/>
        <end position="85"/>
    </location>
</feature>
<feature type="propeptide" id="PRO_0000011222">
    <location>
        <begin position="87"/>
        <end position="144"/>
    </location>
</feature>
<feature type="region of interest" description="Disordered" evidence="2">
    <location>
        <begin position="92"/>
        <end position="112"/>
    </location>
</feature>
<name>GIP_RAT</name>
<evidence type="ECO:0000250" key="1"/>
<evidence type="ECO:0000256" key="2">
    <source>
        <dbReference type="SAM" id="MobiDB-lite"/>
    </source>
</evidence>
<evidence type="ECO:0000305" key="3"/>
<accession>Q06145</accession>
<sequence length="144" mass="16401">MVALKTCSLLLVLLFLAVGLGEKEEVEFRSHAKFAGPRPRGPRYAEGTFISDYSIAMDKIRQQDFVNWLLAQKGKKNDWKHNLTQREARALELAGQSQRNEEKEAQGSSLPKSLSDEDVLRDLLIQELLAWMADQAELCRLRSQ</sequence>
<reference key="1">
    <citation type="journal article" date="1992" name="J. Mol. Endocrinol.">
        <title>Characterization of rat gastric inhibitory peptide cDNA.</title>
        <authorList>
            <person name="Sharma S.K."/>
            <person name="Austin C."/>
            <person name="Howard A."/>
            <person name="Lo G."/>
            <person name="Nicholl C.G."/>
            <person name="Legon S."/>
        </authorList>
    </citation>
    <scope>NUCLEOTIDE SEQUENCE [GENOMIC DNA]</scope>
    <source>
        <strain>Wistar</strain>
        <tissue>Duodenum</tissue>
    </source>
</reference>
<reference key="2">
    <citation type="journal article" date="1993" name="Proc. Natl. Acad. Sci. U.S.A.">
        <title>Glucose-dependent insulinotropic peptide: structure of the precursor and tissue-specific expression in rat.</title>
        <authorList>
            <person name="Tseng C.C."/>
            <person name="Jarboe L.A."/>
            <person name="Landau S.B."/>
            <person name="Williams E.K."/>
            <person name="Wolfe M."/>
        </authorList>
    </citation>
    <scope>NUCLEOTIDE SEQUENCE [MRNA]</scope>
    <source>
        <strain>Sprague-Dawley</strain>
        <tissue>Jejunum</tissue>
    </source>
</reference>
<reference key="3">
    <citation type="journal article" date="1992" name="Biochim. Biophys. Acta">
        <title>Molecular cloning of rat glucose-dependent insulinotropic peptide (GIP).</title>
        <authorList>
            <person name="Higashimoto Y."/>
            <person name="Liddle R.A."/>
            <person name="Simchock J."/>
        </authorList>
    </citation>
    <scope>NUCLEOTIDE SEQUENCE [MRNA]</scope>
    <source>
        <strain>Sprague-Dawley</strain>
        <tissue>Intestine</tissue>
    </source>
</reference>
<reference key="4">
    <citation type="journal article" date="1993" name="Biochem. Biophys. Res. Commun.">
        <title>Isolation and characterization of the gene encoding rat glucose-dependent insulinotropic peptide.</title>
        <authorList>
            <person name="Higashimoto Y."/>
            <person name="Liddle R.A."/>
        </authorList>
    </citation>
    <scope>NUCLEOTIDE SEQUENCE</scope>
</reference>
<protein>
    <recommendedName>
        <fullName>Gastric inhibitory polypeptide</fullName>
        <shortName>GIP</shortName>
    </recommendedName>
    <alternativeName>
        <fullName>Glucose-dependent insulinotropic polypeptide</fullName>
    </alternativeName>
</protein>
<keyword id="KW-0165">Cleavage on pair of basic residues</keyword>
<keyword id="KW-0372">Hormone</keyword>
<keyword id="KW-1185">Reference proteome</keyword>
<keyword id="KW-0964">Secreted</keyword>
<keyword id="KW-0732">Signal</keyword>
<proteinExistence type="evidence at transcript level"/>
<dbReference type="EMBL" id="X66724">
    <property type="protein sequence ID" value="CAA47256.1"/>
    <property type="molecule type" value="Genomic_DNA"/>
</dbReference>
<dbReference type="EMBL" id="Z19564">
    <property type="protein sequence ID" value="CAA79621.1"/>
    <property type="molecule type" value="mRNA"/>
</dbReference>
<dbReference type="EMBL" id="L08831">
    <property type="protein sequence ID" value="AAA41225.1"/>
    <property type="molecule type" value="mRNA"/>
</dbReference>
<dbReference type="EMBL" id="M92916">
    <property type="protein sequence ID" value="AAA41237.1"/>
    <property type="molecule type" value="mRNA"/>
</dbReference>
<dbReference type="PIR" id="JN0589">
    <property type="entry name" value="JN0589"/>
</dbReference>
<dbReference type="RefSeq" id="NP_062604.1">
    <property type="nucleotide sequence ID" value="NM_019630.4"/>
</dbReference>
<dbReference type="SMR" id="Q06145"/>
<dbReference type="FunCoup" id="Q06145">
    <property type="interactions" value="35"/>
</dbReference>
<dbReference type="STRING" id="10116.ENSRNOP00000008481"/>
<dbReference type="PhosphoSitePlus" id="Q06145"/>
<dbReference type="PaxDb" id="10116-ENSRNOP00000008481"/>
<dbReference type="Ensembl" id="ENSRNOT00000008481.7">
    <property type="protein sequence ID" value="ENSRNOP00000008481.5"/>
    <property type="gene ID" value="ENSRNOG00000006306.7"/>
</dbReference>
<dbReference type="GeneID" id="25040"/>
<dbReference type="KEGG" id="rno:25040"/>
<dbReference type="UCSC" id="RGD:2709">
    <property type="organism name" value="rat"/>
</dbReference>
<dbReference type="AGR" id="RGD:2709"/>
<dbReference type="CTD" id="2695"/>
<dbReference type="RGD" id="2709">
    <property type="gene designation" value="Gip"/>
</dbReference>
<dbReference type="eggNOG" id="ENOG502S7ZH">
    <property type="taxonomic scope" value="Eukaryota"/>
</dbReference>
<dbReference type="GeneTree" id="ENSGT00390000005121"/>
<dbReference type="HOGENOM" id="CLU_146415_0_0_1"/>
<dbReference type="InParanoid" id="Q06145"/>
<dbReference type="OMA" id="GHSRFHT"/>
<dbReference type="OrthoDB" id="8874823at2759"/>
<dbReference type="PhylomeDB" id="Q06145"/>
<dbReference type="TreeFam" id="TF332333"/>
<dbReference type="Reactome" id="R-RNO-400511">
    <property type="pathway name" value="Synthesis, secretion, and inactivation of Glucose-dependent Insulinotropic Polypeptide (GIP)"/>
</dbReference>
<dbReference type="Reactome" id="R-RNO-420092">
    <property type="pathway name" value="Glucagon-type ligand receptors"/>
</dbReference>
<dbReference type="PRO" id="PR:Q06145"/>
<dbReference type="Proteomes" id="UP000002494">
    <property type="component" value="Chromosome 10"/>
</dbReference>
<dbReference type="Bgee" id="ENSRNOG00000006306">
    <property type="expression patterns" value="Expressed in duodenum and 5 other cell types or tissues"/>
</dbReference>
<dbReference type="GO" id="GO:0005615">
    <property type="term" value="C:extracellular space"/>
    <property type="evidence" value="ECO:0000314"/>
    <property type="project" value="RGD"/>
</dbReference>
<dbReference type="GO" id="GO:0043025">
    <property type="term" value="C:neuronal cell body"/>
    <property type="evidence" value="ECO:0000314"/>
    <property type="project" value="RGD"/>
</dbReference>
<dbReference type="GO" id="GO:0031767">
    <property type="term" value="F:gastric inhibitory polypeptide receptor binding"/>
    <property type="evidence" value="ECO:0000266"/>
    <property type="project" value="RGD"/>
</dbReference>
<dbReference type="GO" id="GO:0031769">
    <property type="term" value="F:glucagon receptor binding"/>
    <property type="evidence" value="ECO:0000318"/>
    <property type="project" value="GO_Central"/>
</dbReference>
<dbReference type="GO" id="GO:0005179">
    <property type="term" value="F:hormone activity"/>
    <property type="evidence" value="ECO:0007669"/>
    <property type="project" value="UniProtKB-KW"/>
</dbReference>
<dbReference type="GO" id="GO:0048018">
    <property type="term" value="F:receptor ligand activity"/>
    <property type="evidence" value="ECO:0000266"/>
    <property type="project" value="RGD"/>
</dbReference>
<dbReference type="GO" id="GO:0005102">
    <property type="term" value="F:signaling receptor binding"/>
    <property type="evidence" value="ECO:0000315"/>
    <property type="project" value="RGD"/>
</dbReference>
<dbReference type="GO" id="GO:0007189">
    <property type="term" value="P:adenylate cyclase-activating G protein-coupled receptor signaling pathway"/>
    <property type="evidence" value="ECO:0000266"/>
    <property type="project" value="RGD"/>
</dbReference>
<dbReference type="GO" id="GO:0008344">
    <property type="term" value="P:adult locomotory behavior"/>
    <property type="evidence" value="ECO:0000266"/>
    <property type="project" value="RGD"/>
</dbReference>
<dbReference type="GO" id="GO:0055123">
    <property type="term" value="P:digestive system development"/>
    <property type="evidence" value="ECO:0000270"/>
    <property type="project" value="RGD"/>
</dbReference>
<dbReference type="GO" id="GO:0031018">
    <property type="term" value="P:endocrine pancreas development"/>
    <property type="evidence" value="ECO:0000266"/>
    <property type="project" value="RGD"/>
</dbReference>
<dbReference type="GO" id="GO:0035640">
    <property type="term" value="P:exploration behavior"/>
    <property type="evidence" value="ECO:0000266"/>
    <property type="project" value="RGD"/>
</dbReference>
<dbReference type="GO" id="GO:0007565">
    <property type="term" value="P:female pregnancy"/>
    <property type="evidence" value="ECO:0000270"/>
    <property type="project" value="RGD"/>
</dbReference>
<dbReference type="GO" id="GO:0038192">
    <property type="term" value="P:gastric inhibitory peptide signaling pathway"/>
    <property type="evidence" value="ECO:0000266"/>
    <property type="project" value="RGD"/>
</dbReference>
<dbReference type="GO" id="GO:0060291">
    <property type="term" value="P:long-term synaptic potentiation"/>
    <property type="evidence" value="ECO:0000314"/>
    <property type="project" value="RGD"/>
</dbReference>
<dbReference type="GO" id="GO:0007613">
    <property type="term" value="P:memory"/>
    <property type="evidence" value="ECO:0000266"/>
    <property type="project" value="RGD"/>
</dbReference>
<dbReference type="GO" id="GO:0141163">
    <property type="term" value="P:positive regulation of cAMP/PKA signal transduction"/>
    <property type="evidence" value="ECO:0000315"/>
    <property type="project" value="RGD"/>
</dbReference>
<dbReference type="GO" id="GO:0010828">
    <property type="term" value="P:positive regulation of D-glucose transmembrane transport"/>
    <property type="evidence" value="ECO:0000315"/>
    <property type="project" value="RGD"/>
</dbReference>
<dbReference type="GO" id="GO:0032024">
    <property type="term" value="P:positive regulation of insulin secretion"/>
    <property type="evidence" value="ECO:0000315"/>
    <property type="project" value="RGD"/>
</dbReference>
<dbReference type="GO" id="GO:0050806">
    <property type="term" value="P:positive regulation of synaptic transmission"/>
    <property type="evidence" value="ECO:0000314"/>
    <property type="project" value="RGD"/>
</dbReference>
<dbReference type="GO" id="GO:0042304">
    <property type="term" value="P:regulation of fatty acid biosynthetic process"/>
    <property type="evidence" value="ECO:0007669"/>
    <property type="project" value="InterPro"/>
</dbReference>
<dbReference type="GO" id="GO:0050796">
    <property type="term" value="P:regulation of insulin secretion"/>
    <property type="evidence" value="ECO:0000304"/>
    <property type="project" value="RGD"/>
</dbReference>
<dbReference type="GO" id="GO:0010447">
    <property type="term" value="P:response to acidic pH"/>
    <property type="evidence" value="ECO:0000315"/>
    <property type="project" value="RGD"/>
</dbReference>
<dbReference type="GO" id="GO:0043200">
    <property type="term" value="P:response to amino acid"/>
    <property type="evidence" value="ECO:0000270"/>
    <property type="project" value="RGD"/>
</dbReference>
<dbReference type="GO" id="GO:0048678">
    <property type="term" value="P:response to axon injury"/>
    <property type="evidence" value="ECO:0000270"/>
    <property type="project" value="RGD"/>
</dbReference>
<dbReference type="GO" id="GO:0009743">
    <property type="term" value="P:response to carbohydrate"/>
    <property type="evidence" value="ECO:0000270"/>
    <property type="project" value="RGD"/>
</dbReference>
<dbReference type="GO" id="GO:0009749">
    <property type="term" value="P:response to glucose"/>
    <property type="evidence" value="ECO:0000270"/>
    <property type="project" value="RGD"/>
</dbReference>
<dbReference type="GO" id="GO:0033993">
    <property type="term" value="P:response to lipid"/>
    <property type="evidence" value="ECO:0000270"/>
    <property type="project" value="RGD"/>
</dbReference>
<dbReference type="GO" id="GO:0031667">
    <property type="term" value="P:response to nutrient levels"/>
    <property type="evidence" value="ECO:0000270"/>
    <property type="project" value="RGD"/>
</dbReference>
<dbReference type="GO" id="GO:0043434">
    <property type="term" value="P:response to peptide hormone"/>
    <property type="evidence" value="ECO:0000270"/>
    <property type="project" value="RGD"/>
</dbReference>
<dbReference type="GO" id="GO:0010269">
    <property type="term" value="P:response to selenium ion"/>
    <property type="evidence" value="ECO:0000270"/>
    <property type="project" value="RGD"/>
</dbReference>
<dbReference type="GO" id="GO:0042594">
    <property type="term" value="P:response to starvation"/>
    <property type="evidence" value="ECO:0000270"/>
    <property type="project" value="RGD"/>
</dbReference>
<dbReference type="GO" id="GO:0009410">
    <property type="term" value="P:response to xenobiotic stimulus"/>
    <property type="evidence" value="ECO:0000270"/>
    <property type="project" value="RGD"/>
</dbReference>
<dbReference type="GO" id="GO:0019233">
    <property type="term" value="P:sensory perception of pain"/>
    <property type="evidence" value="ECO:0000266"/>
    <property type="project" value="RGD"/>
</dbReference>
<dbReference type="GO" id="GO:0070328">
    <property type="term" value="P:triglyceride homeostasis"/>
    <property type="evidence" value="ECO:0000315"/>
    <property type="project" value="RGD"/>
</dbReference>
<dbReference type="Gene3D" id="6.10.250.590">
    <property type="match status" value="1"/>
</dbReference>
<dbReference type="InterPro" id="IPR039078">
    <property type="entry name" value="GIP"/>
</dbReference>
<dbReference type="InterPro" id="IPR000532">
    <property type="entry name" value="Glucagon_GIP_secretin_VIP"/>
</dbReference>
<dbReference type="PANTHER" id="PTHR15211:SF0">
    <property type="entry name" value="GASTRIC INHIBITORY POLYPEPTIDE"/>
    <property type="match status" value="1"/>
</dbReference>
<dbReference type="PANTHER" id="PTHR15211">
    <property type="entry name" value="GLUCOSE-DEPENDENT INSULINOTROPIC POLYPEPTIDE"/>
    <property type="match status" value="1"/>
</dbReference>
<dbReference type="Pfam" id="PF00123">
    <property type="entry name" value="Hormone_2"/>
    <property type="match status" value="1"/>
</dbReference>
<dbReference type="SMART" id="SM00070">
    <property type="entry name" value="GLUCA"/>
    <property type="match status" value="1"/>
</dbReference>
<dbReference type="PROSITE" id="PS00260">
    <property type="entry name" value="GLUCAGON"/>
    <property type="match status" value="1"/>
</dbReference>
<comment type="function">
    <text>Potent stimulator of insulin secretion and relatively poor inhibitor of gastric acid secretion.</text>
</comment>
<comment type="subcellular location">
    <subcellularLocation>
        <location>Secreted</location>
    </subcellularLocation>
</comment>
<comment type="tissue specificity">
    <text>Highly expressed in the duodenum and jejunum.</text>
</comment>
<comment type="similarity">
    <text evidence="3">Belongs to the glucagon family.</text>
</comment>
<organism>
    <name type="scientific">Rattus norvegicus</name>
    <name type="common">Rat</name>
    <dbReference type="NCBI Taxonomy" id="10116"/>
    <lineage>
        <taxon>Eukaryota</taxon>
        <taxon>Metazoa</taxon>
        <taxon>Chordata</taxon>
        <taxon>Craniata</taxon>
        <taxon>Vertebrata</taxon>
        <taxon>Euteleostomi</taxon>
        <taxon>Mammalia</taxon>
        <taxon>Eutheria</taxon>
        <taxon>Euarchontoglires</taxon>
        <taxon>Glires</taxon>
        <taxon>Rodentia</taxon>
        <taxon>Myomorpha</taxon>
        <taxon>Muroidea</taxon>
        <taxon>Muridae</taxon>
        <taxon>Murinae</taxon>
        <taxon>Rattus</taxon>
    </lineage>
</organism>
<gene>
    <name type="primary">Gip</name>
</gene>